<gene>
    <name evidence="1" type="primary">lpxD</name>
    <name type="ordered locus">AZC_1702</name>
</gene>
<evidence type="ECO:0000255" key="1">
    <source>
        <dbReference type="HAMAP-Rule" id="MF_00523"/>
    </source>
</evidence>
<sequence>MSEPAFFPLPTPLTLDEVAALSGARLARPGAQDALRLTGVGTLADAGPSELAFLDQSRYLATLGTARAGAIITSEKFAGEVPEAIAVLVSPRPASAFVAVTRQLFPQALRPQPVFGHTGIAPGAFIHPTASLEAGVTVDPGAVIGPGAEVGAGSVICANAVVGAGVRIGRDSTIGAGVSLSHALVGNRVIVHAGARIGQDGFGYQPGPGGHLKVPQIGRVVLQDDVEVGAGSTIDRGALRDTVIGEGTKIDNLVQIAHNVVIGRHCIIVSQTGISGSTTLGDFVMLGGQVGVVGHCTIGDGAQIAASSNVKGDVPPGVRWGGSPAKPVREWFREMTTLKKLAESRARSGAATPGEEE</sequence>
<accession>A8I485</accession>
<keyword id="KW-0012">Acyltransferase</keyword>
<keyword id="KW-0441">Lipid A biosynthesis</keyword>
<keyword id="KW-0444">Lipid biosynthesis</keyword>
<keyword id="KW-0443">Lipid metabolism</keyword>
<keyword id="KW-1185">Reference proteome</keyword>
<keyword id="KW-0677">Repeat</keyword>
<keyword id="KW-0808">Transferase</keyword>
<comment type="function">
    <text evidence="1">Catalyzes the N-acylation of UDP-3-O-acylglucosamine using 3-hydroxyacyl-ACP as the acyl donor. Is involved in the biosynthesis of lipid A, a phosphorylated glycolipid that anchors the lipopolysaccharide to the outer membrane of the cell.</text>
</comment>
<comment type="catalytic activity">
    <reaction evidence="1">
        <text>a UDP-3-O-[(3R)-3-hydroxyacyl]-alpha-D-glucosamine + a (3R)-hydroxyacyl-[ACP] = a UDP-2-N,3-O-bis[(3R)-3-hydroxyacyl]-alpha-D-glucosamine + holo-[ACP] + H(+)</text>
        <dbReference type="Rhea" id="RHEA:53836"/>
        <dbReference type="Rhea" id="RHEA-COMP:9685"/>
        <dbReference type="Rhea" id="RHEA-COMP:9945"/>
        <dbReference type="ChEBI" id="CHEBI:15378"/>
        <dbReference type="ChEBI" id="CHEBI:64479"/>
        <dbReference type="ChEBI" id="CHEBI:78827"/>
        <dbReference type="ChEBI" id="CHEBI:137740"/>
        <dbReference type="ChEBI" id="CHEBI:137748"/>
        <dbReference type="EC" id="2.3.1.191"/>
    </reaction>
</comment>
<comment type="pathway">
    <text evidence="1">Bacterial outer membrane biogenesis; LPS lipid A biosynthesis.</text>
</comment>
<comment type="subunit">
    <text evidence="1">Homotrimer.</text>
</comment>
<comment type="similarity">
    <text evidence="1">Belongs to the transferase hexapeptide repeat family. LpxD subfamily.</text>
</comment>
<organism>
    <name type="scientific">Azorhizobium caulinodans (strain ATCC 43989 / DSM 5975 / JCM 20966 / LMG 6465 / NBRC 14845 / NCIMB 13405 / ORS 571)</name>
    <dbReference type="NCBI Taxonomy" id="438753"/>
    <lineage>
        <taxon>Bacteria</taxon>
        <taxon>Pseudomonadati</taxon>
        <taxon>Pseudomonadota</taxon>
        <taxon>Alphaproteobacteria</taxon>
        <taxon>Hyphomicrobiales</taxon>
        <taxon>Xanthobacteraceae</taxon>
        <taxon>Azorhizobium</taxon>
    </lineage>
</organism>
<feature type="chain" id="PRO_1000072492" description="UDP-3-O-acylglucosamine N-acyltransferase">
    <location>
        <begin position="1"/>
        <end position="357"/>
    </location>
</feature>
<feature type="active site" description="Proton acceptor" evidence="1">
    <location>
        <position position="258"/>
    </location>
</feature>
<proteinExistence type="inferred from homology"/>
<reference key="1">
    <citation type="submission" date="2007-04" db="EMBL/GenBank/DDBJ databases">
        <title>Complete genome sequence of the nitrogen-fixing bacterium Azorhizobium caulinodans ORS571.</title>
        <authorList>
            <person name="Lee K.B."/>
            <person name="Backer P.D."/>
            <person name="Aono T."/>
            <person name="Liu C.T."/>
            <person name="Suzuki S."/>
            <person name="Suzuki T."/>
            <person name="Kaneko T."/>
            <person name="Yamada M."/>
            <person name="Tabata S."/>
            <person name="Kupfer D.M."/>
            <person name="Najar F.Z."/>
            <person name="Wiley G.B."/>
            <person name="Roe B."/>
            <person name="Binnewies T."/>
            <person name="Ussery D."/>
            <person name="Vereecke D."/>
            <person name="Gevers D."/>
            <person name="Holsters M."/>
            <person name="Oyaizu H."/>
        </authorList>
    </citation>
    <scope>NUCLEOTIDE SEQUENCE [LARGE SCALE GENOMIC DNA]</scope>
    <source>
        <strain>ATCC 43989 / DSM 5975 / JCM 20966 / LMG 6465 / NBRC 14845 / NCIMB 13405 / ORS 571</strain>
    </source>
</reference>
<dbReference type="EC" id="2.3.1.191" evidence="1"/>
<dbReference type="EMBL" id="AP009384">
    <property type="protein sequence ID" value="BAF87700.1"/>
    <property type="molecule type" value="Genomic_DNA"/>
</dbReference>
<dbReference type="RefSeq" id="WP_012170230.1">
    <property type="nucleotide sequence ID" value="NC_009937.1"/>
</dbReference>
<dbReference type="SMR" id="A8I485"/>
<dbReference type="STRING" id="438753.AZC_1702"/>
<dbReference type="KEGG" id="azc:AZC_1702"/>
<dbReference type="eggNOG" id="COG1044">
    <property type="taxonomic scope" value="Bacteria"/>
</dbReference>
<dbReference type="HOGENOM" id="CLU_049865_0_2_5"/>
<dbReference type="UniPathway" id="UPA00973"/>
<dbReference type="Proteomes" id="UP000000270">
    <property type="component" value="Chromosome"/>
</dbReference>
<dbReference type="GO" id="GO:0016020">
    <property type="term" value="C:membrane"/>
    <property type="evidence" value="ECO:0007669"/>
    <property type="project" value="GOC"/>
</dbReference>
<dbReference type="GO" id="GO:0016410">
    <property type="term" value="F:N-acyltransferase activity"/>
    <property type="evidence" value="ECO:0007669"/>
    <property type="project" value="InterPro"/>
</dbReference>
<dbReference type="GO" id="GO:0009245">
    <property type="term" value="P:lipid A biosynthetic process"/>
    <property type="evidence" value="ECO:0007669"/>
    <property type="project" value="UniProtKB-UniRule"/>
</dbReference>
<dbReference type="CDD" id="cd03352">
    <property type="entry name" value="LbH_LpxD"/>
    <property type="match status" value="1"/>
</dbReference>
<dbReference type="Gene3D" id="2.160.10.10">
    <property type="entry name" value="Hexapeptide repeat proteins"/>
    <property type="match status" value="1"/>
</dbReference>
<dbReference type="Gene3D" id="3.40.1390.10">
    <property type="entry name" value="MurE/MurF, N-terminal domain"/>
    <property type="match status" value="1"/>
</dbReference>
<dbReference type="HAMAP" id="MF_00523">
    <property type="entry name" value="LpxD"/>
    <property type="match status" value="1"/>
</dbReference>
<dbReference type="InterPro" id="IPR001451">
    <property type="entry name" value="Hexapep"/>
</dbReference>
<dbReference type="InterPro" id="IPR018357">
    <property type="entry name" value="Hexapep_transf_CS"/>
</dbReference>
<dbReference type="InterPro" id="IPR007691">
    <property type="entry name" value="LpxD"/>
</dbReference>
<dbReference type="InterPro" id="IPR011004">
    <property type="entry name" value="Trimer_LpxA-like_sf"/>
</dbReference>
<dbReference type="InterPro" id="IPR020573">
    <property type="entry name" value="UDP_GlcNAc_AcTrfase_non-rep"/>
</dbReference>
<dbReference type="NCBIfam" id="TIGR01853">
    <property type="entry name" value="lipid_A_lpxD"/>
    <property type="match status" value="1"/>
</dbReference>
<dbReference type="NCBIfam" id="NF002060">
    <property type="entry name" value="PRK00892.1"/>
    <property type="match status" value="1"/>
</dbReference>
<dbReference type="PANTHER" id="PTHR43378">
    <property type="entry name" value="UDP-3-O-ACYLGLUCOSAMINE N-ACYLTRANSFERASE"/>
    <property type="match status" value="1"/>
</dbReference>
<dbReference type="PANTHER" id="PTHR43378:SF2">
    <property type="entry name" value="UDP-3-O-ACYLGLUCOSAMINE N-ACYLTRANSFERASE 1, MITOCHONDRIAL-RELATED"/>
    <property type="match status" value="1"/>
</dbReference>
<dbReference type="Pfam" id="PF00132">
    <property type="entry name" value="Hexapep"/>
    <property type="match status" value="2"/>
</dbReference>
<dbReference type="Pfam" id="PF04613">
    <property type="entry name" value="LpxD"/>
    <property type="match status" value="1"/>
</dbReference>
<dbReference type="SUPFAM" id="SSF51161">
    <property type="entry name" value="Trimeric LpxA-like enzymes"/>
    <property type="match status" value="1"/>
</dbReference>
<dbReference type="PROSITE" id="PS00101">
    <property type="entry name" value="HEXAPEP_TRANSFERASES"/>
    <property type="match status" value="2"/>
</dbReference>
<name>LPXD_AZOC5</name>
<protein>
    <recommendedName>
        <fullName evidence="1">UDP-3-O-acylglucosamine N-acyltransferase</fullName>
        <ecNumber evidence="1">2.3.1.191</ecNumber>
    </recommendedName>
</protein>